<organism>
    <name type="scientific">Psychromonas ingrahamii (strain DSM 17664 / CCUG 51855 / 37)</name>
    <dbReference type="NCBI Taxonomy" id="357804"/>
    <lineage>
        <taxon>Bacteria</taxon>
        <taxon>Pseudomonadati</taxon>
        <taxon>Pseudomonadota</taxon>
        <taxon>Gammaproteobacteria</taxon>
        <taxon>Alteromonadales</taxon>
        <taxon>Psychromonadaceae</taxon>
        <taxon>Psychromonas</taxon>
    </lineage>
</organism>
<comment type="function">
    <text evidence="1">Plays an essential role in the initiation and regulation of chromosomal replication. ATP-DnaA binds to the origin of replication (oriC) to initiate formation of the DNA replication initiation complex once per cell cycle. Binds the DnaA box (a 9 base pair repeat at the origin) and separates the double-stranded (ds)DNA. Forms a right-handed helical filament on oriC DNA; dsDNA binds to the exterior of the filament while single-stranded (ss)DNA is stabiized in the filament's interior. The ATP-DnaA-oriC complex binds and stabilizes one strand of the AT-rich DNA unwinding element (DUE), permitting loading of DNA polymerase. After initiation quickly degrades to an ADP-DnaA complex that is not apt for DNA replication. Binds acidic phospholipids.</text>
</comment>
<comment type="subunit">
    <text evidence="1">Oligomerizes as a right-handed, spiral filament on DNA at oriC.</text>
</comment>
<comment type="subcellular location">
    <subcellularLocation>
        <location evidence="1">Cytoplasm</location>
    </subcellularLocation>
</comment>
<comment type="domain">
    <text evidence="1">Domain I is involved in oligomerization and binding regulators, domain II is flexibile and of varying length in different bacteria, domain III forms the AAA+ region, while domain IV binds dsDNA.</text>
</comment>
<comment type="similarity">
    <text evidence="1">Belongs to the DnaA family.</text>
</comment>
<sequence length="458" mass="52114">MSLAIWQECLAQLKDELSAGDFSTWLRPLQADFNHSTLSLYSPNKYTSEWVRNKYMATIEDKVQQLVNQENPNHSVKIRLMVGNVSSVEKKPAKQIPTQAPLTNQPWEGESKAHRVPHKSNLIKKYTFDNFVEGKSNNFAIATTQQIAENPGDVYNPLFLYAHPGLGKTHLLHAVGNAILAENPESKVVYIRSERFVQDMINSIRNNTIEQFKEYYASLDALLIDDIHFFAGKDRSQEVLFQTFNSMLDAHQQVILTSDRFPKEIEGIDERLRTRFGWGLSIPIDPPELETRVAILITKAEERGLKLPDDVAFFIAKRLTITDVRVLEGAIANISAKAQFTGQGITISLVQDALRDMLAVHTKQTTIDNIQKIVAQHYRIKISDMSSKRRTRTVARPRQIAMALAKELTQHSLPEIGEAFGGRDHTTVLHACRKVQELRRENNDIQEDYKILIRTLSM</sequence>
<proteinExistence type="inferred from homology"/>
<dbReference type="EMBL" id="CP000510">
    <property type="protein sequence ID" value="ABM05389.1"/>
    <property type="molecule type" value="Genomic_DNA"/>
</dbReference>
<dbReference type="RefSeq" id="WP_011771937.1">
    <property type="nucleotide sequence ID" value="NC_008709.1"/>
</dbReference>
<dbReference type="SMR" id="A1T0X4"/>
<dbReference type="STRING" id="357804.Ping_3714"/>
<dbReference type="KEGG" id="pin:Ping_3714"/>
<dbReference type="eggNOG" id="COG0593">
    <property type="taxonomic scope" value="Bacteria"/>
</dbReference>
<dbReference type="HOGENOM" id="CLU_026910_0_1_6"/>
<dbReference type="OrthoDB" id="9807019at2"/>
<dbReference type="Proteomes" id="UP000000639">
    <property type="component" value="Chromosome"/>
</dbReference>
<dbReference type="GO" id="GO:0005737">
    <property type="term" value="C:cytoplasm"/>
    <property type="evidence" value="ECO:0007669"/>
    <property type="project" value="UniProtKB-SubCell"/>
</dbReference>
<dbReference type="GO" id="GO:0005886">
    <property type="term" value="C:plasma membrane"/>
    <property type="evidence" value="ECO:0007669"/>
    <property type="project" value="TreeGrafter"/>
</dbReference>
<dbReference type="GO" id="GO:0005524">
    <property type="term" value="F:ATP binding"/>
    <property type="evidence" value="ECO:0007669"/>
    <property type="project" value="UniProtKB-UniRule"/>
</dbReference>
<dbReference type="GO" id="GO:0016887">
    <property type="term" value="F:ATP hydrolysis activity"/>
    <property type="evidence" value="ECO:0007669"/>
    <property type="project" value="InterPro"/>
</dbReference>
<dbReference type="GO" id="GO:0003688">
    <property type="term" value="F:DNA replication origin binding"/>
    <property type="evidence" value="ECO:0007669"/>
    <property type="project" value="UniProtKB-UniRule"/>
</dbReference>
<dbReference type="GO" id="GO:0008289">
    <property type="term" value="F:lipid binding"/>
    <property type="evidence" value="ECO:0007669"/>
    <property type="project" value="UniProtKB-KW"/>
</dbReference>
<dbReference type="GO" id="GO:0006270">
    <property type="term" value="P:DNA replication initiation"/>
    <property type="evidence" value="ECO:0007669"/>
    <property type="project" value="UniProtKB-UniRule"/>
</dbReference>
<dbReference type="GO" id="GO:0006275">
    <property type="term" value="P:regulation of DNA replication"/>
    <property type="evidence" value="ECO:0007669"/>
    <property type="project" value="UniProtKB-UniRule"/>
</dbReference>
<dbReference type="CDD" id="cd00009">
    <property type="entry name" value="AAA"/>
    <property type="match status" value="1"/>
</dbReference>
<dbReference type="CDD" id="cd06571">
    <property type="entry name" value="Bac_DnaA_C"/>
    <property type="match status" value="1"/>
</dbReference>
<dbReference type="FunFam" id="1.10.1750.10:FF:000001">
    <property type="entry name" value="Chromosomal replication initiator protein DnaA"/>
    <property type="match status" value="1"/>
</dbReference>
<dbReference type="FunFam" id="3.40.50.300:FF:000668">
    <property type="entry name" value="Chromosomal replication initiator protein DnaA"/>
    <property type="match status" value="1"/>
</dbReference>
<dbReference type="Gene3D" id="1.10.1750.10">
    <property type="match status" value="1"/>
</dbReference>
<dbReference type="Gene3D" id="1.10.8.60">
    <property type="match status" value="1"/>
</dbReference>
<dbReference type="Gene3D" id="3.30.300.180">
    <property type="match status" value="1"/>
</dbReference>
<dbReference type="Gene3D" id="3.40.50.300">
    <property type="entry name" value="P-loop containing nucleotide triphosphate hydrolases"/>
    <property type="match status" value="1"/>
</dbReference>
<dbReference type="HAMAP" id="MF_00377">
    <property type="entry name" value="DnaA_bact"/>
    <property type="match status" value="1"/>
</dbReference>
<dbReference type="InterPro" id="IPR003593">
    <property type="entry name" value="AAA+_ATPase"/>
</dbReference>
<dbReference type="InterPro" id="IPR001957">
    <property type="entry name" value="Chromosome_initiator_DnaA"/>
</dbReference>
<dbReference type="InterPro" id="IPR020591">
    <property type="entry name" value="Chromosome_initiator_DnaA-like"/>
</dbReference>
<dbReference type="InterPro" id="IPR018312">
    <property type="entry name" value="Chromosome_initiator_DnaA_CS"/>
</dbReference>
<dbReference type="InterPro" id="IPR013159">
    <property type="entry name" value="DnaA_C"/>
</dbReference>
<dbReference type="InterPro" id="IPR013317">
    <property type="entry name" value="DnaA_dom"/>
</dbReference>
<dbReference type="InterPro" id="IPR024633">
    <property type="entry name" value="DnaA_N_dom"/>
</dbReference>
<dbReference type="InterPro" id="IPR038454">
    <property type="entry name" value="DnaA_N_sf"/>
</dbReference>
<dbReference type="InterPro" id="IPR027417">
    <property type="entry name" value="P-loop_NTPase"/>
</dbReference>
<dbReference type="InterPro" id="IPR010921">
    <property type="entry name" value="Trp_repressor/repl_initiator"/>
</dbReference>
<dbReference type="NCBIfam" id="TIGR00362">
    <property type="entry name" value="DnaA"/>
    <property type="match status" value="1"/>
</dbReference>
<dbReference type="PANTHER" id="PTHR30050">
    <property type="entry name" value="CHROMOSOMAL REPLICATION INITIATOR PROTEIN DNAA"/>
    <property type="match status" value="1"/>
</dbReference>
<dbReference type="PANTHER" id="PTHR30050:SF2">
    <property type="entry name" value="CHROMOSOMAL REPLICATION INITIATOR PROTEIN DNAA"/>
    <property type="match status" value="1"/>
</dbReference>
<dbReference type="Pfam" id="PF00308">
    <property type="entry name" value="Bac_DnaA"/>
    <property type="match status" value="1"/>
</dbReference>
<dbReference type="Pfam" id="PF08299">
    <property type="entry name" value="Bac_DnaA_C"/>
    <property type="match status" value="1"/>
</dbReference>
<dbReference type="Pfam" id="PF11638">
    <property type="entry name" value="DnaA_N"/>
    <property type="match status" value="1"/>
</dbReference>
<dbReference type="PRINTS" id="PR00051">
    <property type="entry name" value="DNAA"/>
</dbReference>
<dbReference type="SMART" id="SM00382">
    <property type="entry name" value="AAA"/>
    <property type="match status" value="1"/>
</dbReference>
<dbReference type="SMART" id="SM00760">
    <property type="entry name" value="Bac_DnaA_C"/>
    <property type="match status" value="1"/>
</dbReference>
<dbReference type="SUPFAM" id="SSF52540">
    <property type="entry name" value="P-loop containing nucleoside triphosphate hydrolases"/>
    <property type="match status" value="1"/>
</dbReference>
<dbReference type="SUPFAM" id="SSF48295">
    <property type="entry name" value="TrpR-like"/>
    <property type="match status" value="1"/>
</dbReference>
<dbReference type="PROSITE" id="PS01008">
    <property type="entry name" value="DNAA"/>
    <property type="match status" value="1"/>
</dbReference>
<accession>A1T0X4</accession>
<gene>
    <name evidence="1" type="primary">dnaA</name>
    <name type="ordered locus">Ping_3714</name>
</gene>
<feature type="chain" id="PRO_1000048698" description="Chromosomal replication initiator protein DnaA">
    <location>
        <begin position="1"/>
        <end position="458"/>
    </location>
</feature>
<feature type="region of interest" description="Domain I, interacts with DnaA modulators" evidence="1">
    <location>
        <begin position="1"/>
        <end position="79"/>
    </location>
</feature>
<feature type="region of interest" description="Domain II" evidence="1">
    <location>
        <begin position="79"/>
        <end position="120"/>
    </location>
</feature>
<feature type="region of interest" description="Disordered" evidence="2">
    <location>
        <begin position="92"/>
        <end position="114"/>
    </location>
</feature>
<feature type="region of interest" description="Domain III, AAA+ region" evidence="1">
    <location>
        <begin position="121"/>
        <end position="338"/>
    </location>
</feature>
<feature type="region of interest" description="Domain IV, binds dsDNA" evidence="1">
    <location>
        <begin position="339"/>
        <end position="458"/>
    </location>
</feature>
<feature type="compositionally biased region" description="Polar residues" evidence="2">
    <location>
        <begin position="96"/>
        <end position="106"/>
    </location>
</feature>
<feature type="binding site" evidence="1">
    <location>
        <position position="165"/>
    </location>
    <ligand>
        <name>ATP</name>
        <dbReference type="ChEBI" id="CHEBI:30616"/>
    </ligand>
</feature>
<feature type="binding site" evidence="1">
    <location>
        <position position="167"/>
    </location>
    <ligand>
        <name>ATP</name>
        <dbReference type="ChEBI" id="CHEBI:30616"/>
    </ligand>
</feature>
<feature type="binding site" evidence="1">
    <location>
        <position position="168"/>
    </location>
    <ligand>
        <name>ATP</name>
        <dbReference type="ChEBI" id="CHEBI:30616"/>
    </ligand>
</feature>
<feature type="binding site" evidence="1">
    <location>
        <position position="169"/>
    </location>
    <ligand>
        <name>ATP</name>
        <dbReference type="ChEBI" id="CHEBI:30616"/>
    </ligand>
</feature>
<name>DNAA_PSYIN</name>
<reference key="1">
    <citation type="journal article" date="2008" name="BMC Genomics">
        <title>Genomics of an extreme psychrophile, Psychromonas ingrahamii.</title>
        <authorList>
            <person name="Riley M."/>
            <person name="Staley J.T."/>
            <person name="Danchin A."/>
            <person name="Wang T.Z."/>
            <person name="Brettin T.S."/>
            <person name="Hauser L.J."/>
            <person name="Land M.L."/>
            <person name="Thompson L.S."/>
        </authorList>
    </citation>
    <scope>NUCLEOTIDE SEQUENCE [LARGE SCALE GENOMIC DNA]</scope>
    <source>
        <strain>DSM 17664 / CCUG 51855 / 37</strain>
    </source>
</reference>
<evidence type="ECO:0000255" key="1">
    <source>
        <dbReference type="HAMAP-Rule" id="MF_00377"/>
    </source>
</evidence>
<evidence type="ECO:0000256" key="2">
    <source>
        <dbReference type="SAM" id="MobiDB-lite"/>
    </source>
</evidence>
<protein>
    <recommendedName>
        <fullName evidence="1">Chromosomal replication initiator protein DnaA</fullName>
    </recommendedName>
</protein>
<keyword id="KW-0067">ATP-binding</keyword>
<keyword id="KW-0963">Cytoplasm</keyword>
<keyword id="KW-0235">DNA replication</keyword>
<keyword id="KW-0238">DNA-binding</keyword>
<keyword id="KW-0446">Lipid-binding</keyword>
<keyword id="KW-0547">Nucleotide-binding</keyword>
<keyword id="KW-1185">Reference proteome</keyword>